<evidence type="ECO:0000269" key="1">
    <source>
    </source>
</evidence>
<evidence type="ECO:0000269" key="2">
    <source>
    </source>
</evidence>
<evidence type="ECO:0000269" key="3">
    <source>
    </source>
</evidence>
<evidence type="ECO:0000269" key="4">
    <source>
    </source>
</evidence>
<evidence type="ECO:0000269" key="5">
    <source>
    </source>
</evidence>
<evidence type="ECO:0000303" key="6">
    <source>
    </source>
</evidence>
<evidence type="ECO:0000305" key="7"/>
<evidence type="ECO:0000305" key="8">
    <source>
    </source>
</evidence>
<protein>
    <recommendedName>
        <fullName>Probable serine/threonine-protein phosphatase PP2A regulatory subunit</fullName>
    </recommendedName>
    <alternativeName>
        <fullName>Protein phosphatase PP2A regulatory subunit A</fullName>
    </alternativeName>
</protein>
<name>2AAA_CAEEL</name>
<keyword id="KW-0963">Cytoplasm</keyword>
<keyword id="KW-0206">Cytoskeleton</keyword>
<keyword id="KW-1185">Reference proteome</keyword>
<keyword id="KW-0677">Repeat</keyword>
<gene>
    <name type="primary">paa-1</name>
    <name type="ORF">F48E8.5</name>
</gene>
<organism>
    <name type="scientific">Caenorhabditis elegans</name>
    <dbReference type="NCBI Taxonomy" id="6239"/>
    <lineage>
        <taxon>Eukaryota</taxon>
        <taxon>Metazoa</taxon>
        <taxon>Ecdysozoa</taxon>
        <taxon>Nematoda</taxon>
        <taxon>Chromadorea</taxon>
        <taxon>Rhabditida</taxon>
        <taxon>Rhabditina</taxon>
        <taxon>Rhabditomorpha</taxon>
        <taxon>Rhabditoidea</taxon>
        <taxon>Rhabditidae</taxon>
        <taxon>Peloderinae</taxon>
        <taxon>Caenorhabditis</taxon>
    </lineage>
</organism>
<feature type="chain" id="PRO_0000071407" description="Probable serine/threonine-protein phosphatase PP2A regulatory subunit">
    <location>
        <begin position="1"/>
        <end position="590"/>
    </location>
</feature>
<feature type="repeat" description="HEAT 1">
    <location>
        <begin position="37"/>
        <end position="73"/>
    </location>
</feature>
<feature type="repeat" description="HEAT 2">
    <location>
        <begin position="74"/>
        <end position="111"/>
    </location>
</feature>
<feature type="repeat" description="HEAT 3">
    <location>
        <begin position="113"/>
        <end position="150"/>
    </location>
</feature>
<feature type="repeat" description="HEAT 4">
    <location>
        <begin position="151"/>
        <end position="188"/>
    </location>
</feature>
<feature type="repeat" description="HEAT 5">
    <location>
        <begin position="189"/>
        <end position="227"/>
    </location>
</feature>
<feature type="repeat" description="HEAT 6">
    <location>
        <begin position="228"/>
        <end position="266"/>
    </location>
</feature>
<feature type="repeat" description="HEAT 7">
    <location>
        <begin position="267"/>
        <end position="305"/>
    </location>
</feature>
<feature type="repeat" description="HEAT 8">
    <location>
        <begin position="306"/>
        <end position="344"/>
    </location>
</feature>
<feature type="repeat" description="HEAT 9">
    <location>
        <begin position="349"/>
        <end position="387"/>
    </location>
</feature>
<feature type="repeat" description="HEAT 10">
    <location>
        <begin position="388"/>
        <end position="426"/>
    </location>
</feature>
<feature type="repeat" description="HEAT 11">
    <location>
        <begin position="427"/>
        <end position="465"/>
    </location>
</feature>
<feature type="repeat" description="HEAT 12">
    <location>
        <begin position="466"/>
        <end position="504"/>
    </location>
</feature>
<feature type="repeat" description="HEAT 13">
    <location>
        <begin position="505"/>
        <end position="543"/>
    </location>
</feature>
<feature type="repeat" description="HEAT 14">
    <location>
        <begin position="544"/>
        <end position="582"/>
    </location>
</feature>
<reference key="1">
    <citation type="journal article" date="1998" name="Science">
        <title>Genome sequence of the nematode C. elegans: a platform for investigating biology.</title>
        <authorList>
            <consortium name="The C. elegans sequencing consortium"/>
        </authorList>
    </citation>
    <scope>NUCLEOTIDE SEQUENCE [LARGE SCALE GENOMIC DNA]</scope>
    <source>
        <strain>Bristol N2</strain>
    </source>
</reference>
<reference key="2">
    <citation type="journal article" date="1999" name="Genes Dev.">
        <title>A PP2A regulatory subunit positively regulates Ras-mediated signaling during Caenorhabditis elegans vulval induction.</title>
        <authorList>
            <person name="Sieburth D.S."/>
            <person name="Sundaram M."/>
            <person name="Howard R.M."/>
            <person name="Han M."/>
        </authorList>
    </citation>
    <scope>FUNCTION</scope>
    <scope>DISRUPTION PHENOTYPE</scope>
    <source>
        <strain>Bristol N2</strain>
    </source>
</reference>
<reference key="3">
    <citation type="journal article" date="2007" name="Cell">
        <title>The C. elegans RSA complex localizes protein phosphatase 2A to centrosomes and regulates mitotic spindle assembly.</title>
        <authorList>
            <person name="Schlaitz A.L."/>
            <person name="Srayko M."/>
            <person name="Dammermann A."/>
            <person name="Quintin S."/>
            <person name="Wielsch N."/>
            <person name="MacLeod I."/>
            <person name="de Robillard Q."/>
            <person name="Zinke A."/>
            <person name="Yates J.R. III"/>
            <person name="Mueller-Reichert T."/>
            <person name="Shevchenko A."/>
            <person name="Oegema K."/>
            <person name="Hyman A.A."/>
        </authorList>
    </citation>
    <scope>FUNCTION</scope>
    <scope>INTERACTION WITH RSA-1</scope>
</reference>
<reference key="4">
    <citation type="journal article" date="2010" name="Development">
        <title>Protein phosphatase 2A cooperates with the autophagy-related kinase UNC-51 to regulate axon guidance in Caenorhabditis elegans.</title>
        <authorList>
            <person name="Ogura K."/>
            <person name="Okada T."/>
            <person name="Mitani S."/>
            <person name="Gengyo-Ando K."/>
            <person name="Baillie D.L."/>
            <person name="Kohara Y."/>
            <person name="Goshima Y."/>
        </authorList>
    </citation>
    <scope>FUNCTION</scope>
    <source>
        <strain>Bristol N2</strain>
    </source>
</reference>
<reference key="5">
    <citation type="journal article" date="2011" name="Dev. Cell">
        <title>Protein phosphatase 2A-SUR-6/B55 regulates centriole duplication in C. elegans by controlling the levels of centriole assembly factors.</title>
        <authorList>
            <person name="Song M.H."/>
            <person name="Liu Y."/>
            <person name="Anderson D.E."/>
            <person name="Jahng W.J."/>
            <person name="O'Connell K.F."/>
        </authorList>
    </citation>
    <scope>FUNCTION</scope>
    <scope>DISRUPTION PHENOTYPE</scope>
</reference>
<reference key="6">
    <citation type="journal article" date="2013" name="Biol. Open">
        <title>Suppressor mutations identify amino acids in PAA-1/PR65 that facilitate regulatory RSA-1/B'' subunit targeting of PP2A to centrosomes in C. elegans.</title>
        <authorList>
            <person name="Lange K.I."/>
            <person name="Heinrichs J."/>
            <person name="Cheung K."/>
            <person name="Srayko M."/>
        </authorList>
    </citation>
    <scope>FUNCTION</scope>
    <scope>SUBCELLULAR LOCATION</scope>
    <scope>DISRUPTION PHENOTYPE</scope>
</reference>
<proteinExistence type="evidence at protein level"/>
<accession>Q09543</accession>
<comment type="function">
    <text evidence="1 3 5 6 8">Acts as a scaffolding protein for phosphatase let-92 and its regulatory subunits (Probable). Probably together with let-92 and regulatory subunit sur-6, regulates centriole duplication, microtubule outgrowth and mitotic spindle stability during early embryonic cell division by preventing the degradation of sas-5 and kinase zyg-1 (PubMed:17218259, PubMed:23336080). During vulva development, may play a role with phosphatase let-92 and regulatory subunit sur-6 in the induction of vulva cell precursors by positively regulating let-60/Ras-MAP kinase signaling, probably by promoting lin-45 activation (PubMed:10521400). Plays a positive role in axon guidance probably by inhibiting phosphatase let-92 (PubMed:20392746).</text>
</comment>
<comment type="subunit">
    <text evidence="2 8">Part of a complex consisting of a common heterodimeric core enzyme, composed of catalytic subunit let-92 and constant regulatory subunit paa-1, that associates with a variety of regulatory subunits which confer distinct properties to the holoenzyme (PubMed:17218259, PubMed:21497766). Interacts with rsa-1 (PubMed:17218259).</text>
</comment>
<comment type="subcellular location">
    <subcellularLocation>
        <location evidence="5">Cytoplasm</location>
        <location evidence="5">Cytoskeleton</location>
        <location evidence="5">Microtubule organizing center</location>
        <location evidence="5">Centrosome</location>
    </subcellularLocation>
    <subcellularLocation>
        <location evidence="5">Cytoplasm</location>
        <location evidence="5">Cytoskeleton</location>
        <location evidence="5">Spindle</location>
    </subcellularLocation>
    <text evidence="5">Localizes to P granules in embryonic cells.</text>
</comment>
<comment type="domain">
    <text>Each HEAT repeat appears to consist of two alpha helices joined by a hydrophilic region, the intrarepeat loop. The repeat units may be arranged laterally to form a rod-like structure.</text>
</comment>
<comment type="disruption phenotype">
    <text evidence="1 4 5">RNAi-mediated knockdown causes severe embryonic lethality (PubMed:10521400, PubMed:23336080). Causes a failure to duplicate centrioles resulting in the formation of monopolar spindles at the 2-cell embryonic stage (PubMed:21497766, PubMed:23336080). sas-5 protein levels are reduced in embryos (PubMed:21497766). The few surviving animals lack a vulva resulting from defects in vulva cell induction, vulva precursor cell (VPC) generation and in vulval execution linage (PubMed:10521400). Partially suppresses multivulva formation in a let-60 n1046 mutant background (PubMed:10521400).</text>
</comment>
<comment type="similarity">
    <text evidence="7">Belongs to the phosphatase 2A regulatory subunit A family.</text>
</comment>
<dbReference type="EMBL" id="FO081421">
    <property type="protein sequence ID" value="CCD71513.1"/>
    <property type="molecule type" value="Genomic_DNA"/>
</dbReference>
<dbReference type="PIR" id="T16411">
    <property type="entry name" value="T16411"/>
</dbReference>
<dbReference type="RefSeq" id="NP_498162.2">
    <property type="nucleotide sequence ID" value="NM_065761.4"/>
</dbReference>
<dbReference type="SMR" id="Q09543"/>
<dbReference type="BioGRID" id="40979">
    <property type="interactions" value="17"/>
</dbReference>
<dbReference type="ComplexPortal" id="CPX-1357">
    <property type="entry name" value="RSA centrosome-targeting complex"/>
</dbReference>
<dbReference type="ComplexPortal" id="CPX-1361">
    <property type="entry name" value="PP2A-RSA-1 phosphatase complex"/>
</dbReference>
<dbReference type="ComplexPortal" id="CPX-1366">
    <property type="entry name" value="PP2A-SUR-6 phosphatase complex"/>
</dbReference>
<dbReference type="ComplexPortal" id="CPX-1367">
    <property type="entry name" value="PP2A-PPTR-1 phosphatase complex"/>
</dbReference>
<dbReference type="ComplexPortal" id="CPX-1368">
    <property type="entry name" value="PP2A-PPTR-2 phosphatase complex"/>
</dbReference>
<dbReference type="ComplexPortal" id="CPX-1373">
    <property type="entry name" value="PP2A-F43B10.1 phosphatase complex"/>
</dbReference>
<dbReference type="ComplexPortal" id="CPX-1375">
    <property type="entry name" value="PP2A-F47B8.3 phosphatase complex"/>
</dbReference>
<dbReference type="ComplexPortal" id="CPX-1376">
    <property type="entry name" value="PP2A-T22D1.5 phosphatase complex"/>
</dbReference>
<dbReference type="DIP" id="DIP-26927N"/>
<dbReference type="FunCoup" id="Q09543">
    <property type="interactions" value="242"/>
</dbReference>
<dbReference type="IntAct" id="Q09543">
    <property type="interactions" value="7"/>
</dbReference>
<dbReference type="STRING" id="6239.F48E8.5.2"/>
<dbReference type="iPTMnet" id="Q09543"/>
<dbReference type="PaxDb" id="6239-F48E8.5.2"/>
<dbReference type="PeptideAtlas" id="Q09543"/>
<dbReference type="EnsemblMetazoa" id="F48E8.5.1">
    <property type="protein sequence ID" value="F48E8.5.1"/>
    <property type="gene ID" value="WBGene00003901"/>
</dbReference>
<dbReference type="GeneID" id="175750"/>
<dbReference type="KEGG" id="cel:CELE_F48E8.5"/>
<dbReference type="UCSC" id="F48E8.5.2">
    <property type="organism name" value="c. elegans"/>
</dbReference>
<dbReference type="AGR" id="WB:WBGene00003901"/>
<dbReference type="CTD" id="175750"/>
<dbReference type="WormBase" id="F48E8.5">
    <property type="protein sequence ID" value="CE30997"/>
    <property type="gene ID" value="WBGene00003901"/>
    <property type="gene designation" value="paa-1"/>
</dbReference>
<dbReference type="eggNOG" id="KOG0211">
    <property type="taxonomic scope" value="Eukaryota"/>
</dbReference>
<dbReference type="GeneTree" id="ENSGT00950000183066"/>
<dbReference type="HOGENOM" id="CLU_015533_2_1_1"/>
<dbReference type="InParanoid" id="Q09543"/>
<dbReference type="OMA" id="NRVEAMQ"/>
<dbReference type="OrthoDB" id="340346at2759"/>
<dbReference type="PhylomeDB" id="Q09543"/>
<dbReference type="Reactome" id="R-CEL-195253">
    <property type="pathway name" value="Degradation of beta-catenin by the destruction complex"/>
</dbReference>
<dbReference type="Reactome" id="R-CEL-196299">
    <property type="pathway name" value="Beta-catenin phosphorylation cascade"/>
</dbReference>
<dbReference type="Reactome" id="R-CEL-198753">
    <property type="pathway name" value="ERK/MAPK targets"/>
</dbReference>
<dbReference type="Reactome" id="R-CEL-202670">
    <property type="pathway name" value="ERKs are inactivated"/>
</dbReference>
<dbReference type="Reactome" id="R-CEL-2995383">
    <property type="pathway name" value="Initiation of Nuclear Envelope (NE) Reformation"/>
</dbReference>
<dbReference type="Reactome" id="R-CEL-389513">
    <property type="pathway name" value="Co-inhibition by CTLA4"/>
</dbReference>
<dbReference type="Reactome" id="R-CEL-5673000">
    <property type="pathway name" value="RAF activation"/>
</dbReference>
<dbReference type="Reactome" id="R-CEL-5675221">
    <property type="pathway name" value="Negative regulation of MAPK pathway"/>
</dbReference>
<dbReference type="Reactome" id="R-CEL-6811558">
    <property type="pathway name" value="PI5P, PP2A and IER3 Regulate PI3K/AKT Signaling"/>
</dbReference>
<dbReference type="Reactome" id="R-CEL-69231">
    <property type="pathway name" value="Cyclin D associated events in G1"/>
</dbReference>
<dbReference type="Reactome" id="R-CEL-69273">
    <property type="pathway name" value="Cyclin A/B1/B2 associated events during G2/M transition"/>
</dbReference>
<dbReference type="Reactome" id="R-CEL-975957">
    <property type="pathway name" value="Nonsense Mediated Decay (NMD) enhanced by the Exon Junction Complex (EJC)"/>
</dbReference>
<dbReference type="Reactome" id="R-CEL-9833482">
    <property type="pathway name" value="PKR-mediated signaling"/>
</dbReference>
<dbReference type="Reactome" id="R-CEL-9860927">
    <property type="pathway name" value="Turbulent (oscillatory, disturbed) flow shear stress activates signaling by PIEZO1 and integrins in endothelial cells"/>
</dbReference>
<dbReference type="SignaLink" id="Q09543"/>
<dbReference type="PRO" id="PR:Q09543"/>
<dbReference type="Proteomes" id="UP000001940">
    <property type="component" value="Chromosome III"/>
</dbReference>
<dbReference type="Bgee" id="WBGene00003901">
    <property type="expression patterns" value="Expressed in embryo and 4 other cell types or tissues"/>
</dbReference>
<dbReference type="GO" id="GO:0005813">
    <property type="term" value="C:centrosome"/>
    <property type="evidence" value="ECO:0000314"/>
    <property type="project" value="WormBase"/>
</dbReference>
<dbReference type="GO" id="GO:0005737">
    <property type="term" value="C:cytoplasm"/>
    <property type="evidence" value="ECO:0000318"/>
    <property type="project" value="GO_Central"/>
</dbReference>
<dbReference type="GO" id="GO:0005829">
    <property type="term" value="C:cytosol"/>
    <property type="evidence" value="ECO:0000318"/>
    <property type="project" value="GO_Central"/>
</dbReference>
<dbReference type="GO" id="GO:0072686">
    <property type="term" value="C:mitotic spindle"/>
    <property type="evidence" value="ECO:0000314"/>
    <property type="project" value="WormBase"/>
</dbReference>
<dbReference type="GO" id="GO:0005635">
    <property type="term" value="C:nuclear envelope"/>
    <property type="evidence" value="ECO:0000314"/>
    <property type="project" value="WormBase"/>
</dbReference>
<dbReference type="GO" id="GO:0005634">
    <property type="term" value="C:nucleus"/>
    <property type="evidence" value="ECO:0000318"/>
    <property type="project" value="GO_Central"/>
</dbReference>
<dbReference type="GO" id="GO:0043186">
    <property type="term" value="C:P granule"/>
    <property type="evidence" value="ECO:0000314"/>
    <property type="project" value="WormBase"/>
</dbReference>
<dbReference type="GO" id="GO:0000159">
    <property type="term" value="C:protein phosphatase type 2A complex"/>
    <property type="evidence" value="ECO:0000314"/>
    <property type="project" value="ComplexPortal"/>
</dbReference>
<dbReference type="GO" id="GO:0017151">
    <property type="term" value="F:DEAD/H-box RNA helicase binding"/>
    <property type="evidence" value="ECO:0000353"/>
    <property type="project" value="WormBase"/>
</dbReference>
<dbReference type="GO" id="GO:0019888">
    <property type="term" value="F:protein phosphatase regulator activity"/>
    <property type="evidence" value="ECO:0000318"/>
    <property type="project" value="GO_Central"/>
</dbReference>
<dbReference type="GO" id="GO:0098534">
    <property type="term" value="P:centriole assembly"/>
    <property type="evidence" value="ECO:0000303"/>
    <property type="project" value="ComplexPortal"/>
</dbReference>
<dbReference type="GO" id="GO:0009792">
    <property type="term" value="P:embryo development ending in birth or egg hatching"/>
    <property type="evidence" value="ECO:0000315"/>
    <property type="project" value="WormBase"/>
</dbReference>
<dbReference type="GO" id="GO:0051754">
    <property type="term" value="P:meiotic sister chromatid cohesion, centromeric"/>
    <property type="evidence" value="ECO:0000318"/>
    <property type="project" value="GO_Central"/>
</dbReference>
<dbReference type="GO" id="GO:0007052">
    <property type="term" value="P:mitotic spindle organization"/>
    <property type="evidence" value="ECO:0000315"/>
    <property type="project" value="ComplexPortal"/>
</dbReference>
<dbReference type="GO" id="GO:0046627">
    <property type="term" value="P:negative regulation of insulin receptor signaling pathway"/>
    <property type="evidence" value="ECO:0000303"/>
    <property type="project" value="ComplexPortal"/>
</dbReference>
<dbReference type="GO" id="GO:0040028">
    <property type="term" value="P:regulation of vulval development"/>
    <property type="evidence" value="ECO:0000303"/>
    <property type="project" value="ComplexPortal"/>
</dbReference>
<dbReference type="GO" id="GO:0051225">
    <property type="term" value="P:spindle assembly"/>
    <property type="evidence" value="ECO:0000318"/>
    <property type="project" value="GO_Central"/>
</dbReference>
<dbReference type="FunFam" id="1.25.10.10:FF:000011">
    <property type="entry name" value="Serine/threonine-protein phosphatase 2A regulatory subunit A alpha isoform"/>
    <property type="match status" value="1"/>
</dbReference>
<dbReference type="Gene3D" id="1.25.10.10">
    <property type="entry name" value="Leucine-rich Repeat Variant"/>
    <property type="match status" value="1"/>
</dbReference>
<dbReference type="InterPro" id="IPR011989">
    <property type="entry name" value="ARM-like"/>
</dbReference>
<dbReference type="InterPro" id="IPR016024">
    <property type="entry name" value="ARM-type_fold"/>
</dbReference>
<dbReference type="InterPro" id="IPR000357">
    <property type="entry name" value="HEAT"/>
</dbReference>
<dbReference type="InterPro" id="IPR021133">
    <property type="entry name" value="HEAT_type_2"/>
</dbReference>
<dbReference type="InterPro" id="IPR054573">
    <property type="entry name" value="PP2A/SF3B1-like_HEAT"/>
</dbReference>
<dbReference type="InterPro" id="IPR051023">
    <property type="entry name" value="PP2A_Regulatory_Subunit_A"/>
</dbReference>
<dbReference type="PANTHER" id="PTHR10648:SF4">
    <property type="entry name" value="PROTEIN PHOSPHATASE 2 (FORMERLY 2A), REGULATORY SUBUNIT A, BETA ISOFORM-RELATED"/>
    <property type="match status" value="1"/>
</dbReference>
<dbReference type="PANTHER" id="PTHR10648">
    <property type="entry name" value="SERINE/THREONINE-PROTEIN PHOSPHATASE PP2A 65 KDA REGULATORY SUBUNIT"/>
    <property type="match status" value="1"/>
</dbReference>
<dbReference type="Pfam" id="PF02985">
    <property type="entry name" value="HEAT"/>
    <property type="match status" value="4"/>
</dbReference>
<dbReference type="Pfam" id="PF22646">
    <property type="entry name" value="PPP2R1A-like_HEAT"/>
    <property type="match status" value="1"/>
</dbReference>
<dbReference type="SUPFAM" id="SSF48371">
    <property type="entry name" value="ARM repeat"/>
    <property type="match status" value="1"/>
</dbReference>
<dbReference type="PROSITE" id="PS50077">
    <property type="entry name" value="HEAT_REPEAT"/>
    <property type="match status" value="8"/>
</dbReference>
<sequence length="590" mass="66149">MSVVEEATDDALYPIAVLIDELRNEDVTLRLNSIRKLSTIALALGVERTRNELIQFLTDTIYDEDEVLLVLAEQLGNFTPLVGGPDHVHCLLLPLENLATVEETVVRDKAVESLRKIADKHSSASLEEHFVPMLRRLATGDWFTSRTSACGLFSVVYPRVSPAIKSELKSMFRTLCRDDTPMVRRAAAAKLGEFAKVFEKTAVIEGLHSSLTDLHVDEQDSVRLLTVESAIAFGTLLDKANKKKLIEPILIELFDDKSWRVRYMVAEKLIEIQNVLGEDMDTTHLVNMYTNLLKDPEGEVRCAATQRLQEFALNLPEDKRQNIICNSLLNVAKELVTDGNQLVKSELAGVIMGLAPLIGKEQTVSELLPIYMQLLNDQTPEVRLNIISSLDKVNEVIGAAQLSTSLLPAIVGLAEDGKWRVRLAIVQFMPLLASQLGQEFFDEKLLPLCLNWLTDHVFSIREASTLIMKELTQKFGGQWASTNIVPKMQKLQKDTNYLQRMTCLFCLNTLSEAMTQEQILKEIMPIVKDLVEDDVPNVRFNAAKSLKRIGKNLTPSTLTSEVKPLLEKLGKDSDFDVRYFSEEAKNSLGL</sequence>